<comment type="function">
    <text evidence="1">One of the components of the core complex of photosystem II (PSII). PSII is a light-driven water:plastoquinone oxidoreductase that uses light energy to abstract electrons from H(2)O, generating O(2) and a proton gradient subsequently used for ATP formation. It consists of a core antenna complex that captures photons, and an electron transfer chain that converts photonic excitation into a charge separation. This subunit is found at the monomer-monomer interface and is required for correct PSII assembly and/or dimerization.</text>
</comment>
<comment type="subunit">
    <text evidence="1">PSII is composed of 1 copy each of membrane proteins PsbA, PsbB, PsbC, PsbD, PsbE, PsbF, PsbH, PsbI, PsbJ, PsbK, PsbL, PsbM, PsbT, PsbX, PsbY, PsbZ, Psb30/Ycf12, at least 3 peripheral proteins of the oxygen-evolving complex and a large number of cofactors. It forms dimeric complexes.</text>
</comment>
<comment type="subcellular location">
    <subcellularLocation>
        <location evidence="1">Plastid</location>
        <location evidence="1">Chloroplast thylakoid membrane</location>
        <topology evidence="1">Single-pass membrane protein</topology>
    </subcellularLocation>
</comment>
<comment type="similarity">
    <text evidence="1">Belongs to the PsbL family.</text>
</comment>
<proteinExistence type="inferred from homology"/>
<protein>
    <recommendedName>
        <fullName evidence="1">Photosystem II reaction center protein L</fullName>
        <shortName evidence="1">PSII-L</shortName>
    </recommendedName>
</protein>
<keyword id="KW-0150">Chloroplast</keyword>
<keyword id="KW-0472">Membrane</keyword>
<keyword id="KW-0602">Photosynthesis</keyword>
<keyword id="KW-0604">Photosystem II</keyword>
<keyword id="KW-0934">Plastid</keyword>
<keyword id="KW-0674">Reaction center</keyword>
<keyword id="KW-0793">Thylakoid</keyword>
<keyword id="KW-0812">Transmembrane</keyword>
<keyword id="KW-1133">Transmembrane helix</keyword>
<feature type="chain" id="PRO_0000353258" description="Photosystem II reaction center protein L">
    <location>
        <begin position="1"/>
        <end position="38"/>
    </location>
</feature>
<feature type="transmembrane region" description="Helical" evidence="1">
    <location>
        <begin position="17"/>
        <end position="37"/>
    </location>
</feature>
<accession>A6MMV9</accession>
<evidence type="ECO:0000255" key="1">
    <source>
        <dbReference type="HAMAP-Rule" id="MF_01317"/>
    </source>
</evidence>
<geneLocation type="chloroplast"/>
<organism>
    <name type="scientific">Illicium oligandrum</name>
    <name type="common">Star anise</name>
    <dbReference type="NCBI Taxonomy" id="145286"/>
    <lineage>
        <taxon>Eukaryota</taxon>
        <taxon>Viridiplantae</taxon>
        <taxon>Streptophyta</taxon>
        <taxon>Embryophyta</taxon>
        <taxon>Tracheophyta</taxon>
        <taxon>Spermatophyta</taxon>
        <taxon>Magnoliopsida</taxon>
        <taxon>Austrobaileyales</taxon>
        <taxon>Schisandraceae</taxon>
        <taxon>Illicium</taxon>
    </lineage>
</organism>
<name>PSBL_ILLOL</name>
<reference key="1">
    <citation type="journal article" date="2007" name="Mol. Phylogenet. Evol.">
        <title>Phylogenetic and evolutionary implications of complete chloroplast genome sequences of four early-diverging angiosperms: Buxus (Buxaceae), Chloranthus (Chloranthaceae), Dioscorea (Dioscoreaceae), and Illicium (Schisandraceae).</title>
        <authorList>
            <person name="Hansen D.R."/>
            <person name="Dastidar S.G."/>
            <person name="Cai Z."/>
            <person name="Penaflor C."/>
            <person name="Kuehl J.V."/>
            <person name="Boore J.L."/>
            <person name="Jansen R.K."/>
        </authorList>
    </citation>
    <scope>NUCLEOTIDE SEQUENCE [LARGE SCALE GENOMIC DNA]</scope>
</reference>
<gene>
    <name evidence="1" type="primary">psbL</name>
</gene>
<dbReference type="EMBL" id="EF380354">
    <property type="protein sequence ID" value="ABQ52534.1"/>
    <property type="molecule type" value="Genomic_DNA"/>
</dbReference>
<dbReference type="RefSeq" id="YP_001294285.1">
    <property type="nucleotide sequence ID" value="NC_009600.1"/>
</dbReference>
<dbReference type="SMR" id="A6MMV9"/>
<dbReference type="GeneID" id="5236785"/>
<dbReference type="GO" id="GO:0009535">
    <property type="term" value="C:chloroplast thylakoid membrane"/>
    <property type="evidence" value="ECO:0007669"/>
    <property type="project" value="UniProtKB-SubCell"/>
</dbReference>
<dbReference type="GO" id="GO:0009539">
    <property type="term" value="C:photosystem II reaction center"/>
    <property type="evidence" value="ECO:0007669"/>
    <property type="project" value="InterPro"/>
</dbReference>
<dbReference type="GO" id="GO:0015979">
    <property type="term" value="P:photosynthesis"/>
    <property type="evidence" value="ECO:0007669"/>
    <property type="project" value="UniProtKB-UniRule"/>
</dbReference>
<dbReference type="HAMAP" id="MF_01317">
    <property type="entry name" value="PSII_PsbL"/>
    <property type="match status" value="1"/>
</dbReference>
<dbReference type="InterPro" id="IPR003372">
    <property type="entry name" value="PSII_PsbL"/>
</dbReference>
<dbReference type="InterPro" id="IPR037266">
    <property type="entry name" value="PSII_PsbL_sf"/>
</dbReference>
<dbReference type="NCBIfam" id="NF001972">
    <property type="entry name" value="PRK00753.1"/>
    <property type="match status" value="1"/>
</dbReference>
<dbReference type="Pfam" id="PF02419">
    <property type="entry name" value="PsbL"/>
    <property type="match status" value="1"/>
</dbReference>
<dbReference type="SUPFAM" id="SSF161017">
    <property type="entry name" value="Photosystem II reaction center protein L, PsbL"/>
    <property type="match status" value="1"/>
</dbReference>
<sequence>MTQSNPNEQNVELNRTSLYWGLLLIFVLAVLFSNYFFN</sequence>